<gene>
    <name evidence="1" type="primary">slyX</name>
    <name type="ordered locus">BSUIS_B1063</name>
</gene>
<dbReference type="EMBL" id="CP000912">
    <property type="protein sequence ID" value="ABY40012.1"/>
    <property type="molecule type" value="Genomic_DNA"/>
</dbReference>
<dbReference type="RefSeq" id="WP_006074185.1">
    <property type="nucleotide sequence ID" value="NC_010167.1"/>
</dbReference>
<dbReference type="SMR" id="A9WW76"/>
<dbReference type="KEGG" id="bmt:BSUIS_B1063"/>
<dbReference type="HOGENOM" id="CLU_180796_5_0_5"/>
<dbReference type="Proteomes" id="UP000008545">
    <property type="component" value="Chromosome II"/>
</dbReference>
<dbReference type="Gene3D" id="1.20.5.300">
    <property type="match status" value="1"/>
</dbReference>
<dbReference type="HAMAP" id="MF_00715">
    <property type="entry name" value="SlyX"/>
    <property type="match status" value="1"/>
</dbReference>
<dbReference type="InterPro" id="IPR007236">
    <property type="entry name" value="SlyX"/>
</dbReference>
<dbReference type="NCBIfam" id="NF001962">
    <property type="entry name" value="PRK00736.1"/>
    <property type="match status" value="1"/>
</dbReference>
<dbReference type="PANTHER" id="PTHR36508">
    <property type="entry name" value="PROTEIN SLYX"/>
    <property type="match status" value="1"/>
</dbReference>
<dbReference type="PANTHER" id="PTHR36508:SF1">
    <property type="entry name" value="PROTEIN SLYX"/>
    <property type="match status" value="1"/>
</dbReference>
<dbReference type="Pfam" id="PF04102">
    <property type="entry name" value="SlyX"/>
    <property type="match status" value="1"/>
</dbReference>
<sequence>MSAEERLIELEIRVAEQEKTIDELSSVLTEQWKTVDQLSKKLNALTNRFLELKEQAAPDVPVTKPPHW</sequence>
<evidence type="ECO:0000255" key="1">
    <source>
        <dbReference type="HAMAP-Rule" id="MF_00715"/>
    </source>
</evidence>
<proteinExistence type="inferred from homology"/>
<protein>
    <recommendedName>
        <fullName evidence="1">Protein SlyX homolog</fullName>
    </recommendedName>
</protein>
<accession>A9WW76</accession>
<comment type="similarity">
    <text evidence="1">Belongs to the SlyX family.</text>
</comment>
<feature type="chain" id="PRO_1000083237" description="Protein SlyX homolog">
    <location>
        <begin position="1"/>
        <end position="68"/>
    </location>
</feature>
<organism>
    <name type="scientific">Brucella suis (strain ATCC 23445 / NCTC 10510)</name>
    <dbReference type="NCBI Taxonomy" id="470137"/>
    <lineage>
        <taxon>Bacteria</taxon>
        <taxon>Pseudomonadati</taxon>
        <taxon>Pseudomonadota</taxon>
        <taxon>Alphaproteobacteria</taxon>
        <taxon>Hyphomicrobiales</taxon>
        <taxon>Brucellaceae</taxon>
        <taxon>Brucella/Ochrobactrum group</taxon>
        <taxon>Brucella</taxon>
    </lineage>
</organism>
<reference key="1">
    <citation type="submission" date="2007-12" db="EMBL/GenBank/DDBJ databases">
        <title>Brucella suis ATCC 23445 whole genome shotgun sequencing project.</title>
        <authorList>
            <person name="Setubal J.C."/>
            <person name="Bowns C."/>
            <person name="Boyle S."/>
            <person name="Crasta O.R."/>
            <person name="Czar M.J."/>
            <person name="Dharmanolla C."/>
            <person name="Gillespie J.J."/>
            <person name="Kenyon R.W."/>
            <person name="Lu J."/>
            <person name="Mane S."/>
            <person name="Mohapatra S."/>
            <person name="Nagrani S."/>
            <person name="Purkayastha A."/>
            <person name="Rajasimha H.K."/>
            <person name="Shallom J.M."/>
            <person name="Shallom S."/>
            <person name="Shukla M."/>
            <person name="Snyder E.E."/>
            <person name="Sobral B.W."/>
            <person name="Wattam A.R."/>
            <person name="Will R."/>
            <person name="Williams K."/>
            <person name="Yoo H."/>
            <person name="Bruce D."/>
            <person name="Detter C."/>
            <person name="Munk C."/>
            <person name="Brettin T.S."/>
        </authorList>
    </citation>
    <scope>NUCLEOTIDE SEQUENCE [LARGE SCALE GENOMIC DNA]</scope>
    <source>
        <strain>ATCC 23445 / NCTC 10510</strain>
    </source>
</reference>
<name>SLYX_BRUSI</name>